<feature type="chain" id="PRO_1000090971" description="Aspartate--tRNA(Asp/Asn) ligase">
    <location>
        <begin position="1"/>
        <end position="599"/>
    </location>
</feature>
<feature type="region of interest" description="Aspartate" evidence="1">
    <location>
        <begin position="198"/>
        <end position="201"/>
    </location>
</feature>
<feature type="binding site" evidence="1">
    <location>
        <position position="174"/>
    </location>
    <ligand>
        <name>L-aspartate</name>
        <dbReference type="ChEBI" id="CHEBI:29991"/>
    </ligand>
</feature>
<feature type="binding site" evidence="1">
    <location>
        <begin position="220"/>
        <end position="222"/>
    </location>
    <ligand>
        <name>ATP</name>
        <dbReference type="ChEBI" id="CHEBI:30616"/>
    </ligand>
</feature>
<feature type="binding site" evidence="1">
    <location>
        <position position="220"/>
    </location>
    <ligand>
        <name>L-aspartate</name>
        <dbReference type="ChEBI" id="CHEBI:29991"/>
    </ligand>
</feature>
<feature type="binding site" evidence="1">
    <location>
        <position position="229"/>
    </location>
    <ligand>
        <name>ATP</name>
        <dbReference type="ChEBI" id="CHEBI:30616"/>
    </ligand>
</feature>
<feature type="binding site" evidence="1">
    <location>
        <position position="457"/>
    </location>
    <ligand>
        <name>L-aspartate</name>
        <dbReference type="ChEBI" id="CHEBI:29991"/>
    </ligand>
</feature>
<feature type="binding site" evidence="1">
    <location>
        <position position="491"/>
    </location>
    <ligand>
        <name>ATP</name>
        <dbReference type="ChEBI" id="CHEBI:30616"/>
    </ligand>
</feature>
<feature type="binding site" evidence="1">
    <location>
        <position position="498"/>
    </location>
    <ligand>
        <name>L-aspartate</name>
        <dbReference type="ChEBI" id="CHEBI:29991"/>
    </ligand>
</feature>
<feature type="binding site" evidence="1">
    <location>
        <begin position="543"/>
        <end position="546"/>
    </location>
    <ligand>
        <name>ATP</name>
        <dbReference type="ChEBI" id="CHEBI:30616"/>
    </ligand>
</feature>
<feature type="site" description="Important for tRNA non-discrimination" evidence="1">
    <location>
        <position position="32"/>
    </location>
</feature>
<feature type="site" description="Important for tRNA non-discrimination" evidence="1">
    <location>
        <position position="83"/>
    </location>
</feature>
<reference key="1">
    <citation type="journal article" date="2014" name="Stand. Genomic Sci.">
        <title>Complete genome sequence of Burkholderia phymatum STM815(T), a broad host range and efficient nitrogen-fixing symbiont of Mimosa species.</title>
        <authorList>
            <person name="Moulin L."/>
            <person name="Klonowska A."/>
            <person name="Caroline B."/>
            <person name="Booth K."/>
            <person name="Vriezen J.A."/>
            <person name="Melkonian R."/>
            <person name="James E.K."/>
            <person name="Young J.P."/>
            <person name="Bena G."/>
            <person name="Hauser L."/>
            <person name="Land M."/>
            <person name="Kyrpides N."/>
            <person name="Bruce D."/>
            <person name="Chain P."/>
            <person name="Copeland A."/>
            <person name="Pitluck S."/>
            <person name="Woyke T."/>
            <person name="Lizotte-Waniewski M."/>
            <person name="Bristow J."/>
            <person name="Riley M."/>
        </authorList>
    </citation>
    <scope>NUCLEOTIDE SEQUENCE [LARGE SCALE GENOMIC DNA]</scope>
    <source>
        <strain>DSM 17167 / CIP 108236 / LMG 21445 / STM815</strain>
    </source>
</reference>
<gene>
    <name evidence="1" type="primary">aspS</name>
    <name type="ordered locus">Bphy_0381</name>
</gene>
<proteinExistence type="inferred from homology"/>
<comment type="function">
    <text evidence="1">Aspartyl-tRNA synthetase with relaxed tRNA specificity since it is able to aspartylate not only its cognate tRNA(Asp) but also tRNA(Asn). Reaction proceeds in two steps: L-aspartate is first activated by ATP to form Asp-AMP and then transferred to the acceptor end of tRNA(Asp/Asn).</text>
</comment>
<comment type="catalytic activity">
    <reaction evidence="1">
        <text>tRNA(Asx) + L-aspartate + ATP = L-aspartyl-tRNA(Asx) + AMP + diphosphate</text>
        <dbReference type="Rhea" id="RHEA:18349"/>
        <dbReference type="Rhea" id="RHEA-COMP:9710"/>
        <dbReference type="Rhea" id="RHEA-COMP:9711"/>
        <dbReference type="ChEBI" id="CHEBI:29991"/>
        <dbReference type="ChEBI" id="CHEBI:30616"/>
        <dbReference type="ChEBI" id="CHEBI:33019"/>
        <dbReference type="ChEBI" id="CHEBI:78442"/>
        <dbReference type="ChEBI" id="CHEBI:78516"/>
        <dbReference type="ChEBI" id="CHEBI:456215"/>
        <dbReference type="EC" id="6.1.1.23"/>
    </reaction>
</comment>
<comment type="subunit">
    <text evidence="1">Homodimer.</text>
</comment>
<comment type="subcellular location">
    <subcellularLocation>
        <location evidence="1">Cytoplasm</location>
    </subcellularLocation>
</comment>
<comment type="similarity">
    <text evidence="1">Belongs to the class-II aminoacyl-tRNA synthetase family. Type 1 subfamily.</text>
</comment>
<protein>
    <recommendedName>
        <fullName evidence="1">Aspartate--tRNA(Asp/Asn) ligase</fullName>
        <ecNumber evidence="1">6.1.1.23</ecNumber>
    </recommendedName>
    <alternativeName>
        <fullName evidence="1">Aspartyl-tRNA synthetase</fullName>
        <shortName evidence="1">AspRS</shortName>
    </alternativeName>
    <alternativeName>
        <fullName evidence="1">Non-discriminating aspartyl-tRNA synthetase</fullName>
        <shortName evidence="1">ND-AspRS</shortName>
    </alternativeName>
</protein>
<name>SYDND_PARP8</name>
<dbReference type="EC" id="6.1.1.23" evidence="1"/>
<dbReference type="EMBL" id="CP001043">
    <property type="protein sequence ID" value="ACC69574.1"/>
    <property type="molecule type" value="Genomic_DNA"/>
</dbReference>
<dbReference type="RefSeq" id="WP_012399800.1">
    <property type="nucleotide sequence ID" value="NC_010622.1"/>
</dbReference>
<dbReference type="SMR" id="B2JCV5"/>
<dbReference type="STRING" id="391038.Bphy_0381"/>
<dbReference type="KEGG" id="bph:Bphy_0381"/>
<dbReference type="eggNOG" id="COG0173">
    <property type="taxonomic scope" value="Bacteria"/>
</dbReference>
<dbReference type="HOGENOM" id="CLU_014330_3_2_4"/>
<dbReference type="OrthoDB" id="9802326at2"/>
<dbReference type="Proteomes" id="UP000001192">
    <property type="component" value="Chromosome 1"/>
</dbReference>
<dbReference type="GO" id="GO:0005737">
    <property type="term" value="C:cytoplasm"/>
    <property type="evidence" value="ECO:0007669"/>
    <property type="project" value="UniProtKB-SubCell"/>
</dbReference>
<dbReference type="GO" id="GO:0004815">
    <property type="term" value="F:aspartate-tRNA ligase activity"/>
    <property type="evidence" value="ECO:0007669"/>
    <property type="project" value="UniProtKB-UniRule"/>
</dbReference>
<dbReference type="GO" id="GO:0050560">
    <property type="term" value="F:aspartate-tRNA(Asn) ligase activity"/>
    <property type="evidence" value="ECO:0007669"/>
    <property type="project" value="UniProtKB-EC"/>
</dbReference>
<dbReference type="GO" id="GO:0005524">
    <property type="term" value="F:ATP binding"/>
    <property type="evidence" value="ECO:0007669"/>
    <property type="project" value="UniProtKB-UniRule"/>
</dbReference>
<dbReference type="GO" id="GO:0003676">
    <property type="term" value="F:nucleic acid binding"/>
    <property type="evidence" value="ECO:0007669"/>
    <property type="project" value="InterPro"/>
</dbReference>
<dbReference type="GO" id="GO:0006422">
    <property type="term" value="P:aspartyl-tRNA aminoacylation"/>
    <property type="evidence" value="ECO:0007669"/>
    <property type="project" value="UniProtKB-UniRule"/>
</dbReference>
<dbReference type="CDD" id="cd00777">
    <property type="entry name" value="AspRS_core"/>
    <property type="match status" value="1"/>
</dbReference>
<dbReference type="CDD" id="cd04317">
    <property type="entry name" value="EcAspRS_like_N"/>
    <property type="match status" value="1"/>
</dbReference>
<dbReference type="Gene3D" id="3.30.930.10">
    <property type="entry name" value="Bira Bifunctional Protein, Domain 2"/>
    <property type="match status" value="1"/>
</dbReference>
<dbReference type="Gene3D" id="3.30.1360.30">
    <property type="entry name" value="GAD-like domain"/>
    <property type="match status" value="1"/>
</dbReference>
<dbReference type="Gene3D" id="2.40.50.140">
    <property type="entry name" value="Nucleic acid-binding proteins"/>
    <property type="match status" value="1"/>
</dbReference>
<dbReference type="HAMAP" id="MF_00044">
    <property type="entry name" value="Asp_tRNA_synth_type1"/>
    <property type="match status" value="1"/>
</dbReference>
<dbReference type="InterPro" id="IPR004364">
    <property type="entry name" value="Aa-tRNA-synt_II"/>
</dbReference>
<dbReference type="InterPro" id="IPR006195">
    <property type="entry name" value="aa-tRNA-synth_II"/>
</dbReference>
<dbReference type="InterPro" id="IPR045864">
    <property type="entry name" value="aa-tRNA-synth_II/BPL/LPL"/>
</dbReference>
<dbReference type="InterPro" id="IPR004524">
    <property type="entry name" value="Asp-tRNA-ligase_1"/>
</dbReference>
<dbReference type="InterPro" id="IPR047089">
    <property type="entry name" value="Asp-tRNA-ligase_1_N"/>
</dbReference>
<dbReference type="InterPro" id="IPR002312">
    <property type="entry name" value="Asp/Asn-tRNA-synth_IIb"/>
</dbReference>
<dbReference type="InterPro" id="IPR047090">
    <property type="entry name" value="AspRS_core"/>
</dbReference>
<dbReference type="InterPro" id="IPR004115">
    <property type="entry name" value="GAD-like_sf"/>
</dbReference>
<dbReference type="InterPro" id="IPR029351">
    <property type="entry name" value="GAD_dom"/>
</dbReference>
<dbReference type="InterPro" id="IPR012340">
    <property type="entry name" value="NA-bd_OB-fold"/>
</dbReference>
<dbReference type="InterPro" id="IPR004365">
    <property type="entry name" value="NA-bd_OB_tRNA"/>
</dbReference>
<dbReference type="NCBIfam" id="TIGR00459">
    <property type="entry name" value="aspS_bact"/>
    <property type="match status" value="1"/>
</dbReference>
<dbReference type="NCBIfam" id="NF001750">
    <property type="entry name" value="PRK00476.1"/>
    <property type="match status" value="1"/>
</dbReference>
<dbReference type="PANTHER" id="PTHR22594:SF5">
    <property type="entry name" value="ASPARTATE--TRNA LIGASE, MITOCHONDRIAL"/>
    <property type="match status" value="1"/>
</dbReference>
<dbReference type="PANTHER" id="PTHR22594">
    <property type="entry name" value="ASPARTYL/LYSYL-TRNA SYNTHETASE"/>
    <property type="match status" value="1"/>
</dbReference>
<dbReference type="Pfam" id="PF02938">
    <property type="entry name" value="GAD"/>
    <property type="match status" value="1"/>
</dbReference>
<dbReference type="Pfam" id="PF00152">
    <property type="entry name" value="tRNA-synt_2"/>
    <property type="match status" value="1"/>
</dbReference>
<dbReference type="Pfam" id="PF01336">
    <property type="entry name" value="tRNA_anti-codon"/>
    <property type="match status" value="1"/>
</dbReference>
<dbReference type="PRINTS" id="PR01042">
    <property type="entry name" value="TRNASYNTHASP"/>
</dbReference>
<dbReference type="SUPFAM" id="SSF55681">
    <property type="entry name" value="Class II aaRS and biotin synthetases"/>
    <property type="match status" value="1"/>
</dbReference>
<dbReference type="SUPFAM" id="SSF55261">
    <property type="entry name" value="GAD domain-like"/>
    <property type="match status" value="1"/>
</dbReference>
<dbReference type="SUPFAM" id="SSF50249">
    <property type="entry name" value="Nucleic acid-binding proteins"/>
    <property type="match status" value="1"/>
</dbReference>
<dbReference type="PROSITE" id="PS50862">
    <property type="entry name" value="AA_TRNA_LIGASE_II"/>
    <property type="match status" value="1"/>
</dbReference>
<keyword id="KW-0030">Aminoacyl-tRNA synthetase</keyword>
<keyword id="KW-0067">ATP-binding</keyword>
<keyword id="KW-0963">Cytoplasm</keyword>
<keyword id="KW-0436">Ligase</keyword>
<keyword id="KW-0547">Nucleotide-binding</keyword>
<keyword id="KW-0648">Protein biosynthesis</keyword>
<keyword id="KW-1185">Reference proteome</keyword>
<accession>B2JCV5</accession>
<evidence type="ECO:0000255" key="1">
    <source>
        <dbReference type="HAMAP-Rule" id="MF_00044"/>
    </source>
</evidence>
<sequence>MSMRSEYCGLVTEHLLGQTVSLCGWVSRRRDHGGVIFIDLRDREGLVQVVCDPDRAEMFKTAEGVRNEFCVQVKGVVRNRPEGTTNAGLKSGKIEVLCHELNVLNASVTPPFQLDDDNLSETTRLTHRVLDLRRPQMQHNLRLRYRVAMEVRKYLDSRGFIDIETPMLTKSTPEGARDYLVPSRVNAGQFFALPQSPQLFKQLLMVANFDRYYQITKCFRDEDLRADRQPEFTQIDCETSFLSEQEIRDLFEDMTRHVFKETIGVELDAKFAVMPYSEAMSRFGSDKPDLRVKLEFTELTDAMKDVDFKVFSTPANTKDGRVAALRVPKGGELSRGDIDSYTEFVRIYGAKGLAWIKINEVAKGRDGLQSPIVKNLHDAAIAAIIERTGAQDGDIIFFAADRAKVVNDSLGALRLKIGHSEFGKANGLVEAGWKPLWVVDFPMFEYDEEENRYVAAHHPFTSPKDEHLEYLETDPGRCLAKAYDIVLNGWEIGGGSVRIFQEDVQSKVFRALKIGAEEARLKFGFLLDALQYGAPPHGGIAFGLDRIVTMMAGADSIRDVIAFPKTQRAQDLLTQAPSEVDERQLRELHIRLRQPEQKA</sequence>
<organism>
    <name type="scientific">Paraburkholderia phymatum (strain DSM 17167 / CIP 108236 / LMG 21445 / STM815)</name>
    <name type="common">Burkholderia phymatum</name>
    <dbReference type="NCBI Taxonomy" id="391038"/>
    <lineage>
        <taxon>Bacteria</taxon>
        <taxon>Pseudomonadati</taxon>
        <taxon>Pseudomonadota</taxon>
        <taxon>Betaproteobacteria</taxon>
        <taxon>Burkholderiales</taxon>
        <taxon>Burkholderiaceae</taxon>
        <taxon>Paraburkholderia</taxon>
    </lineage>
</organism>